<name>MDH_KOCRD</name>
<reference key="1">
    <citation type="journal article" date="2008" name="J. Bacteriol.">
        <title>Complete genome sequence of the soil actinomycete Kocuria rhizophila.</title>
        <authorList>
            <person name="Takarada H."/>
            <person name="Sekine M."/>
            <person name="Kosugi H."/>
            <person name="Matsuo Y."/>
            <person name="Fujisawa T."/>
            <person name="Omata S."/>
            <person name="Kishi E."/>
            <person name="Shimizu A."/>
            <person name="Tsukatani N."/>
            <person name="Tanikawa S."/>
            <person name="Fujita N."/>
            <person name="Harayama S."/>
        </authorList>
    </citation>
    <scope>NUCLEOTIDE SEQUENCE [LARGE SCALE GENOMIC DNA]</scope>
    <source>
        <strain>ATCC 9341 / DSM 348 / NBRC 103217 / DC2201</strain>
    </source>
</reference>
<organism>
    <name type="scientific">Kocuria rhizophila (strain ATCC 9341 / DSM 348 / NBRC 103217 / DC2201)</name>
    <dbReference type="NCBI Taxonomy" id="378753"/>
    <lineage>
        <taxon>Bacteria</taxon>
        <taxon>Bacillati</taxon>
        <taxon>Actinomycetota</taxon>
        <taxon>Actinomycetes</taxon>
        <taxon>Micrococcales</taxon>
        <taxon>Micrococcaceae</taxon>
        <taxon>Kocuria</taxon>
    </lineage>
</organism>
<dbReference type="EC" id="1.1.1.37" evidence="1"/>
<dbReference type="EMBL" id="AP009152">
    <property type="protein sequence ID" value="BAG29148.1"/>
    <property type="molecule type" value="Genomic_DNA"/>
</dbReference>
<dbReference type="RefSeq" id="WP_012397869.1">
    <property type="nucleotide sequence ID" value="NC_010617.1"/>
</dbReference>
<dbReference type="SMR" id="B2GKC8"/>
<dbReference type="STRING" id="378753.KRH_08010"/>
<dbReference type="KEGG" id="krh:KRH_08010"/>
<dbReference type="eggNOG" id="COG0039">
    <property type="taxonomic scope" value="Bacteria"/>
</dbReference>
<dbReference type="HOGENOM" id="CLU_040727_2_0_11"/>
<dbReference type="OrthoDB" id="9802969at2"/>
<dbReference type="Proteomes" id="UP000008838">
    <property type="component" value="Chromosome"/>
</dbReference>
<dbReference type="GO" id="GO:0030060">
    <property type="term" value="F:L-malate dehydrogenase (NAD+) activity"/>
    <property type="evidence" value="ECO:0007669"/>
    <property type="project" value="UniProtKB-UniRule"/>
</dbReference>
<dbReference type="GO" id="GO:0006108">
    <property type="term" value="P:malate metabolic process"/>
    <property type="evidence" value="ECO:0007669"/>
    <property type="project" value="InterPro"/>
</dbReference>
<dbReference type="GO" id="GO:0006099">
    <property type="term" value="P:tricarboxylic acid cycle"/>
    <property type="evidence" value="ECO:0007669"/>
    <property type="project" value="UniProtKB-UniRule"/>
</dbReference>
<dbReference type="CDD" id="cd01338">
    <property type="entry name" value="MDH_chloroplast-like"/>
    <property type="match status" value="1"/>
</dbReference>
<dbReference type="FunFam" id="3.40.50.720:FF:000010">
    <property type="entry name" value="Malate dehydrogenase"/>
    <property type="match status" value="1"/>
</dbReference>
<dbReference type="FunFam" id="3.90.110.10:FF:000002">
    <property type="entry name" value="Malate dehydrogenase"/>
    <property type="match status" value="1"/>
</dbReference>
<dbReference type="Gene3D" id="3.90.110.10">
    <property type="entry name" value="Lactate dehydrogenase/glycoside hydrolase, family 4, C-terminal"/>
    <property type="match status" value="1"/>
</dbReference>
<dbReference type="Gene3D" id="3.40.50.720">
    <property type="entry name" value="NAD(P)-binding Rossmann-like Domain"/>
    <property type="match status" value="1"/>
</dbReference>
<dbReference type="HAMAP" id="MF_01517">
    <property type="entry name" value="Malate_dehydrog_2"/>
    <property type="match status" value="1"/>
</dbReference>
<dbReference type="InterPro" id="IPR001557">
    <property type="entry name" value="L-lactate/malate_DH"/>
</dbReference>
<dbReference type="InterPro" id="IPR022383">
    <property type="entry name" value="Lactate/malate_DH_C"/>
</dbReference>
<dbReference type="InterPro" id="IPR001236">
    <property type="entry name" value="Lactate/malate_DH_N"/>
</dbReference>
<dbReference type="InterPro" id="IPR015955">
    <property type="entry name" value="Lactate_DH/Glyco_Ohase_4_C"/>
</dbReference>
<dbReference type="InterPro" id="IPR001252">
    <property type="entry name" value="Malate_DH_AS"/>
</dbReference>
<dbReference type="InterPro" id="IPR010945">
    <property type="entry name" value="Malate_DH_type2"/>
</dbReference>
<dbReference type="InterPro" id="IPR036291">
    <property type="entry name" value="NAD(P)-bd_dom_sf"/>
</dbReference>
<dbReference type="NCBIfam" id="TIGR01759">
    <property type="entry name" value="MalateDH-SF1"/>
    <property type="match status" value="1"/>
</dbReference>
<dbReference type="NCBIfam" id="NF003916">
    <property type="entry name" value="PRK05442.1"/>
    <property type="match status" value="1"/>
</dbReference>
<dbReference type="PANTHER" id="PTHR23382">
    <property type="entry name" value="MALATE DEHYDROGENASE"/>
    <property type="match status" value="1"/>
</dbReference>
<dbReference type="Pfam" id="PF02866">
    <property type="entry name" value="Ldh_1_C"/>
    <property type="match status" value="1"/>
</dbReference>
<dbReference type="Pfam" id="PF00056">
    <property type="entry name" value="Ldh_1_N"/>
    <property type="match status" value="1"/>
</dbReference>
<dbReference type="PIRSF" id="PIRSF000102">
    <property type="entry name" value="Lac_mal_DH"/>
    <property type="match status" value="1"/>
</dbReference>
<dbReference type="SUPFAM" id="SSF56327">
    <property type="entry name" value="LDH C-terminal domain-like"/>
    <property type="match status" value="1"/>
</dbReference>
<dbReference type="SUPFAM" id="SSF51735">
    <property type="entry name" value="NAD(P)-binding Rossmann-fold domains"/>
    <property type="match status" value="1"/>
</dbReference>
<dbReference type="PROSITE" id="PS00068">
    <property type="entry name" value="MDH"/>
    <property type="match status" value="1"/>
</dbReference>
<proteinExistence type="inferred from homology"/>
<keyword id="KW-0520">NAD</keyword>
<keyword id="KW-0560">Oxidoreductase</keyword>
<keyword id="KW-1185">Reference proteome</keyword>
<keyword id="KW-0816">Tricarboxylic acid cycle</keyword>
<gene>
    <name evidence="1" type="primary">mdh</name>
    <name type="ordered locus">KRH_08010</name>
</gene>
<protein>
    <recommendedName>
        <fullName evidence="1">Malate dehydrogenase</fullName>
        <ecNumber evidence="1">1.1.1.37</ecNumber>
    </recommendedName>
</protein>
<sequence length="328" mass="34742">MSLTPVTVAVTGAAGQIGYSLLFRIAHGDMLGRQRPVRLRLLEIPSALPALEGTVMELQDCAFPLLADVEIGSDPREVFDGAQLALLVGARPRTKGMERGDLLEANGAIFTEQGRALNDVADHDVRVVVTGNPANTNALIAQRNAPDIPASRFSALTRLDHNRAVAMLAAQTGASVDDVKHLSVWGNHSATQYPDLDHARVAGRPALDLVSREWVQDTFIPTVAKRGAAILEARGASSAASAANATIDHARDLMLGNHRGDWTSMSVVSDGSYGVPEGLVSSFPVTTSGGDWSIVQGLDISEFSRARIDASVAELESERAAVQELGLI</sequence>
<evidence type="ECO:0000255" key="1">
    <source>
        <dbReference type="HAMAP-Rule" id="MF_01517"/>
    </source>
</evidence>
<feature type="chain" id="PRO_1000191622" description="Malate dehydrogenase">
    <location>
        <begin position="1"/>
        <end position="328"/>
    </location>
</feature>
<feature type="active site" description="Proton acceptor" evidence="1">
    <location>
        <position position="188"/>
    </location>
</feature>
<feature type="binding site" evidence="1">
    <location>
        <begin position="12"/>
        <end position="18"/>
    </location>
    <ligand>
        <name>NAD(+)</name>
        <dbReference type="ChEBI" id="CHEBI:57540"/>
    </ligand>
</feature>
<feature type="binding site" evidence="1">
    <location>
        <position position="93"/>
    </location>
    <ligand>
        <name>substrate</name>
    </ligand>
</feature>
<feature type="binding site" evidence="1">
    <location>
        <position position="99"/>
    </location>
    <ligand>
        <name>substrate</name>
    </ligand>
</feature>
<feature type="binding site" evidence="1">
    <location>
        <position position="106"/>
    </location>
    <ligand>
        <name>NAD(+)</name>
        <dbReference type="ChEBI" id="CHEBI:57540"/>
    </ligand>
</feature>
<feature type="binding site" evidence="1">
    <location>
        <position position="113"/>
    </location>
    <ligand>
        <name>NAD(+)</name>
        <dbReference type="ChEBI" id="CHEBI:57540"/>
    </ligand>
</feature>
<feature type="binding site" evidence="1">
    <location>
        <begin position="130"/>
        <end position="132"/>
    </location>
    <ligand>
        <name>NAD(+)</name>
        <dbReference type="ChEBI" id="CHEBI:57540"/>
    </ligand>
</feature>
<feature type="binding site" evidence="1">
    <location>
        <position position="132"/>
    </location>
    <ligand>
        <name>substrate</name>
    </ligand>
</feature>
<feature type="binding site" evidence="1">
    <location>
        <position position="163"/>
    </location>
    <ligand>
        <name>substrate</name>
    </ligand>
</feature>
<accession>B2GKC8</accession>
<comment type="function">
    <text evidence="1">Catalyzes the reversible oxidation of malate to oxaloacetate.</text>
</comment>
<comment type="catalytic activity">
    <reaction evidence="1">
        <text>(S)-malate + NAD(+) = oxaloacetate + NADH + H(+)</text>
        <dbReference type="Rhea" id="RHEA:21432"/>
        <dbReference type="ChEBI" id="CHEBI:15378"/>
        <dbReference type="ChEBI" id="CHEBI:15589"/>
        <dbReference type="ChEBI" id="CHEBI:16452"/>
        <dbReference type="ChEBI" id="CHEBI:57540"/>
        <dbReference type="ChEBI" id="CHEBI:57945"/>
        <dbReference type="EC" id="1.1.1.37"/>
    </reaction>
</comment>
<comment type="similarity">
    <text evidence="1">Belongs to the LDH/MDH superfamily. MDH type 2 family.</text>
</comment>